<name>RBFA_ACTP7</name>
<accession>B3H164</accession>
<organism>
    <name type="scientific">Actinobacillus pleuropneumoniae serotype 7 (strain AP76)</name>
    <dbReference type="NCBI Taxonomy" id="537457"/>
    <lineage>
        <taxon>Bacteria</taxon>
        <taxon>Pseudomonadati</taxon>
        <taxon>Pseudomonadota</taxon>
        <taxon>Gammaproteobacteria</taxon>
        <taxon>Pasteurellales</taxon>
        <taxon>Pasteurellaceae</taxon>
        <taxon>Actinobacillus</taxon>
    </lineage>
</organism>
<reference key="1">
    <citation type="submission" date="2008-06" db="EMBL/GenBank/DDBJ databases">
        <title>Genome and proteome analysis of A. pleuropneumoniae serotype 7.</title>
        <authorList>
            <person name="Linke B."/>
            <person name="Buettner F."/>
            <person name="Martinez-Arias R."/>
            <person name="Goesmann A."/>
            <person name="Baltes N."/>
            <person name="Tegetmeyer H."/>
            <person name="Singh M."/>
            <person name="Gerlach G.F."/>
        </authorList>
    </citation>
    <scope>NUCLEOTIDE SEQUENCE [LARGE SCALE GENOMIC DNA]</scope>
    <source>
        <strain>AP76</strain>
    </source>
</reference>
<keyword id="KW-0963">Cytoplasm</keyword>
<keyword id="KW-0690">Ribosome biogenesis</keyword>
<dbReference type="EMBL" id="CP001091">
    <property type="protein sequence ID" value="ACE61333.1"/>
    <property type="molecule type" value="Genomic_DNA"/>
</dbReference>
<dbReference type="RefSeq" id="WP_005596920.1">
    <property type="nucleotide sequence ID" value="NC_010939.1"/>
</dbReference>
<dbReference type="SMR" id="B3H164"/>
<dbReference type="GeneID" id="48598824"/>
<dbReference type="KEGG" id="apa:APP7_0681"/>
<dbReference type="HOGENOM" id="CLU_089475_5_0_6"/>
<dbReference type="Proteomes" id="UP000001226">
    <property type="component" value="Chromosome"/>
</dbReference>
<dbReference type="GO" id="GO:0005829">
    <property type="term" value="C:cytosol"/>
    <property type="evidence" value="ECO:0007669"/>
    <property type="project" value="TreeGrafter"/>
</dbReference>
<dbReference type="GO" id="GO:0043024">
    <property type="term" value="F:ribosomal small subunit binding"/>
    <property type="evidence" value="ECO:0007669"/>
    <property type="project" value="TreeGrafter"/>
</dbReference>
<dbReference type="GO" id="GO:0030490">
    <property type="term" value="P:maturation of SSU-rRNA"/>
    <property type="evidence" value="ECO:0007669"/>
    <property type="project" value="UniProtKB-UniRule"/>
</dbReference>
<dbReference type="FunFam" id="3.30.300.20:FF:000007">
    <property type="entry name" value="Ribosome-binding factor A"/>
    <property type="match status" value="1"/>
</dbReference>
<dbReference type="Gene3D" id="3.30.300.20">
    <property type="match status" value="1"/>
</dbReference>
<dbReference type="HAMAP" id="MF_00003">
    <property type="entry name" value="RbfA"/>
    <property type="match status" value="1"/>
</dbReference>
<dbReference type="InterPro" id="IPR015946">
    <property type="entry name" value="KH_dom-like_a/b"/>
</dbReference>
<dbReference type="InterPro" id="IPR000238">
    <property type="entry name" value="RbfA"/>
</dbReference>
<dbReference type="InterPro" id="IPR023799">
    <property type="entry name" value="RbfA_dom_sf"/>
</dbReference>
<dbReference type="InterPro" id="IPR020053">
    <property type="entry name" value="Ribosome-bd_factorA_CS"/>
</dbReference>
<dbReference type="NCBIfam" id="TIGR00082">
    <property type="entry name" value="rbfA"/>
    <property type="match status" value="1"/>
</dbReference>
<dbReference type="PANTHER" id="PTHR33515">
    <property type="entry name" value="RIBOSOME-BINDING FACTOR A, CHLOROPLASTIC-RELATED"/>
    <property type="match status" value="1"/>
</dbReference>
<dbReference type="PANTHER" id="PTHR33515:SF1">
    <property type="entry name" value="RIBOSOME-BINDING FACTOR A, CHLOROPLASTIC-RELATED"/>
    <property type="match status" value="1"/>
</dbReference>
<dbReference type="Pfam" id="PF02033">
    <property type="entry name" value="RBFA"/>
    <property type="match status" value="1"/>
</dbReference>
<dbReference type="SUPFAM" id="SSF89919">
    <property type="entry name" value="Ribosome-binding factor A, RbfA"/>
    <property type="match status" value="1"/>
</dbReference>
<dbReference type="PROSITE" id="PS01319">
    <property type="entry name" value="RBFA"/>
    <property type="match status" value="1"/>
</dbReference>
<evidence type="ECO:0000255" key="1">
    <source>
        <dbReference type="HAMAP-Rule" id="MF_00003"/>
    </source>
</evidence>
<proteinExistence type="inferred from homology"/>
<feature type="chain" id="PRO_1000088852" description="Ribosome-binding factor A">
    <location>
        <begin position="1"/>
        <end position="127"/>
    </location>
</feature>
<protein>
    <recommendedName>
        <fullName evidence="1">Ribosome-binding factor A</fullName>
    </recommendedName>
</protein>
<gene>
    <name evidence="1" type="primary">rbfA</name>
    <name type="ordered locus">APP7_0681</name>
</gene>
<comment type="function">
    <text evidence="1">One of several proteins that assist in the late maturation steps of the functional core of the 30S ribosomal subunit. Associates with free 30S ribosomal subunits (but not with 30S subunits that are part of 70S ribosomes or polysomes). Required for efficient processing of 16S rRNA. May interact with the 5'-terminal helix region of 16S rRNA.</text>
</comment>
<comment type="subunit">
    <text evidence="1">Monomer. Binds 30S ribosomal subunits, but not 50S ribosomal subunits or 70S ribosomes.</text>
</comment>
<comment type="subcellular location">
    <subcellularLocation>
        <location evidence="1">Cytoplasm</location>
    </subcellularLocation>
</comment>
<comment type="similarity">
    <text evidence="1">Belongs to the RbfA family.</text>
</comment>
<sequence>MSREFKRSDRVAQELQKEIAVILQREVKDPRIGMVTVSDVEVSRDLAYAKIFVTFLFDNDQSVIEQGMKGLEKASPYIRSLVGKAMRLRIVPELRFIYDQSLVEGMRMSNLVSNVIKNDEAKHKEEE</sequence>